<reference key="1">
    <citation type="submission" date="2008-05" db="EMBL/GenBank/DDBJ databases">
        <title>Complete genome sequence of Clostridium botulinum E3 str. Alaska E43.</title>
        <authorList>
            <person name="Brinkac L.M."/>
            <person name="Brown J.L."/>
            <person name="Bruce D."/>
            <person name="Detter C."/>
            <person name="Munk C."/>
            <person name="Smith L.A."/>
            <person name="Smith T.J."/>
            <person name="Sutton G."/>
            <person name="Brettin T.S."/>
        </authorList>
    </citation>
    <scope>NUCLEOTIDE SEQUENCE [LARGE SCALE GENOMIC DNA]</scope>
    <source>
        <strain>Alaska E43 / Type E3</strain>
    </source>
</reference>
<evidence type="ECO:0000255" key="1">
    <source>
        <dbReference type="HAMAP-Rule" id="MF_00508"/>
    </source>
</evidence>
<evidence type="ECO:0000305" key="2"/>
<proteinExistence type="inferred from homology"/>
<gene>
    <name evidence="1" type="primary">rpsJ</name>
    <name type="ordered locus">CLH_0236</name>
</gene>
<name>RS10_CLOBA</name>
<organism>
    <name type="scientific">Clostridium botulinum (strain Alaska E43 / Type E3)</name>
    <dbReference type="NCBI Taxonomy" id="508767"/>
    <lineage>
        <taxon>Bacteria</taxon>
        <taxon>Bacillati</taxon>
        <taxon>Bacillota</taxon>
        <taxon>Clostridia</taxon>
        <taxon>Eubacteriales</taxon>
        <taxon>Clostridiaceae</taxon>
        <taxon>Clostridium</taxon>
    </lineage>
</organism>
<keyword id="KW-0687">Ribonucleoprotein</keyword>
<keyword id="KW-0689">Ribosomal protein</keyword>
<sequence length="102" mass="11510">MSKQKIRIRLKAFDHTILDQSAEKIVETAKTSGAKVVGPVPLPTEKDVVTILRAVHKYKDSREQFEIRTHKRLIDIVNPSPKTVDALMRLNLPAGVDIEIKL</sequence>
<feature type="chain" id="PRO_1000127103" description="Small ribosomal subunit protein uS10">
    <location>
        <begin position="1"/>
        <end position="102"/>
    </location>
</feature>
<accession>B2UYA9</accession>
<dbReference type="EMBL" id="CP001078">
    <property type="protein sequence ID" value="ACD52559.1"/>
    <property type="molecule type" value="Genomic_DNA"/>
</dbReference>
<dbReference type="RefSeq" id="WP_002582605.1">
    <property type="nucleotide sequence ID" value="NC_010723.1"/>
</dbReference>
<dbReference type="SMR" id="B2UYA9"/>
<dbReference type="GeneID" id="92945893"/>
<dbReference type="KEGG" id="cbt:CLH_0236"/>
<dbReference type="HOGENOM" id="CLU_122625_1_3_9"/>
<dbReference type="GO" id="GO:1990904">
    <property type="term" value="C:ribonucleoprotein complex"/>
    <property type="evidence" value="ECO:0007669"/>
    <property type="project" value="UniProtKB-KW"/>
</dbReference>
<dbReference type="GO" id="GO:0005840">
    <property type="term" value="C:ribosome"/>
    <property type="evidence" value="ECO:0007669"/>
    <property type="project" value="UniProtKB-KW"/>
</dbReference>
<dbReference type="GO" id="GO:0003735">
    <property type="term" value="F:structural constituent of ribosome"/>
    <property type="evidence" value="ECO:0007669"/>
    <property type="project" value="InterPro"/>
</dbReference>
<dbReference type="GO" id="GO:0000049">
    <property type="term" value="F:tRNA binding"/>
    <property type="evidence" value="ECO:0007669"/>
    <property type="project" value="UniProtKB-UniRule"/>
</dbReference>
<dbReference type="GO" id="GO:0006412">
    <property type="term" value="P:translation"/>
    <property type="evidence" value="ECO:0007669"/>
    <property type="project" value="UniProtKB-UniRule"/>
</dbReference>
<dbReference type="FunFam" id="3.30.70.600:FF:000001">
    <property type="entry name" value="30S ribosomal protein S10"/>
    <property type="match status" value="1"/>
</dbReference>
<dbReference type="Gene3D" id="3.30.70.600">
    <property type="entry name" value="Ribosomal protein S10 domain"/>
    <property type="match status" value="1"/>
</dbReference>
<dbReference type="HAMAP" id="MF_00508">
    <property type="entry name" value="Ribosomal_uS10"/>
    <property type="match status" value="1"/>
</dbReference>
<dbReference type="InterPro" id="IPR001848">
    <property type="entry name" value="Ribosomal_uS10"/>
</dbReference>
<dbReference type="InterPro" id="IPR018268">
    <property type="entry name" value="Ribosomal_uS10_CS"/>
</dbReference>
<dbReference type="InterPro" id="IPR027486">
    <property type="entry name" value="Ribosomal_uS10_dom"/>
</dbReference>
<dbReference type="InterPro" id="IPR036838">
    <property type="entry name" value="Ribosomal_uS10_dom_sf"/>
</dbReference>
<dbReference type="NCBIfam" id="NF001861">
    <property type="entry name" value="PRK00596.1"/>
    <property type="match status" value="1"/>
</dbReference>
<dbReference type="NCBIfam" id="TIGR01049">
    <property type="entry name" value="rpsJ_bact"/>
    <property type="match status" value="1"/>
</dbReference>
<dbReference type="PANTHER" id="PTHR11700">
    <property type="entry name" value="30S RIBOSOMAL PROTEIN S10 FAMILY MEMBER"/>
    <property type="match status" value="1"/>
</dbReference>
<dbReference type="Pfam" id="PF00338">
    <property type="entry name" value="Ribosomal_S10"/>
    <property type="match status" value="1"/>
</dbReference>
<dbReference type="PRINTS" id="PR00971">
    <property type="entry name" value="RIBOSOMALS10"/>
</dbReference>
<dbReference type="SMART" id="SM01403">
    <property type="entry name" value="Ribosomal_S10"/>
    <property type="match status" value="1"/>
</dbReference>
<dbReference type="SUPFAM" id="SSF54999">
    <property type="entry name" value="Ribosomal protein S10"/>
    <property type="match status" value="1"/>
</dbReference>
<dbReference type="PROSITE" id="PS00361">
    <property type="entry name" value="RIBOSOMAL_S10"/>
    <property type="match status" value="1"/>
</dbReference>
<comment type="function">
    <text evidence="1">Involved in the binding of tRNA to the ribosomes.</text>
</comment>
<comment type="subunit">
    <text evidence="1">Part of the 30S ribosomal subunit.</text>
</comment>
<comment type="similarity">
    <text evidence="1">Belongs to the universal ribosomal protein uS10 family.</text>
</comment>
<protein>
    <recommendedName>
        <fullName evidence="1">Small ribosomal subunit protein uS10</fullName>
    </recommendedName>
    <alternativeName>
        <fullName evidence="2">30S ribosomal protein S10</fullName>
    </alternativeName>
</protein>